<reference key="1">
    <citation type="journal article" date="1996" name="FEBS Lett.">
        <title>An isochorismate hydroxymutase isogene in Escherichia coli.</title>
        <authorList>
            <person name="Mueller R."/>
            <person name="Dahm C."/>
            <person name="Schulte G."/>
            <person name="Leistner E."/>
        </authorList>
    </citation>
    <scope>NUCLEOTIDE SEQUENCE [GENOMIC DNA]</scope>
    <scope>PATHWAY</scope>
    <source>
        <strain>K12 / MC4100 / ATCC 35695 / DSM 6574</strain>
    </source>
</reference>
<reference key="2">
    <citation type="submission" date="1998-02" db="EMBL/GenBank/DDBJ databases">
        <authorList>
            <person name="Mueller R."/>
        </authorList>
    </citation>
    <scope>SEQUENCE REVISION</scope>
</reference>
<reference key="3">
    <citation type="journal article" date="1996" name="FEMS Microbiol. Lett.">
        <title>A new isochorismate synthase specifically involved in menaquinone (vitamin K2) biosynthesis encoded by the menF gene.</title>
        <authorList>
            <person name="Daruwala R."/>
            <person name="Kwon O."/>
            <person name="Meganathan R."/>
            <person name="Hudspeth M.E.S."/>
        </authorList>
    </citation>
    <scope>NUCLEOTIDE SEQUENCE [GENOMIC DNA]</scope>
    <scope>FUNCTION</scope>
    <scope>CATALYTIC ACTIVITY</scope>
    <source>
        <strain>K12 / PL2024</strain>
    </source>
</reference>
<reference key="4">
    <citation type="journal article" date="1997" name="DNA Res.">
        <title>Construction of a contiguous 874-kb sequence of the Escherichia coli-K12 genome corresponding to 50.0-68.8 min on the linkage map and analysis of its sequence features.</title>
        <authorList>
            <person name="Yamamoto Y."/>
            <person name="Aiba H."/>
            <person name="Baba T."/>
            <person name="Hayashi K."/>
            <person name="Inada T."/>
            <person name="Isono K."/>
            <person name="Itoh T."/>
            <person name="Kimura S."/>
            <person name="Kitagawa M."/>
            <person name="Makino K."/>
            <person name="Miki T."/>
            <person name="Mitsuhashi N."/>
            <person name="Mizobuchi K."/>
            <person name="Mori H."/>
            <person name="Nakade S."/>
            <person name="Nakamura Y."/>
            <person name="Nashimoto H."/>
            <person name="Oshima T."/>
            <person name="Oyama S."/>
            <person name="Saito N."/>
            <person name="Sampei G."/>
            <person name="Satoh Y."/>
            <person name="Sivasundaram S."/>
            <person name="Tagami H."/>
            <person name="Takahashi H."/>
            <person name="Takeda J."/>
            <person name="Takemoto K."/>
            <person name="Uehara K."/>
            <person name="Wada C."/>
            <person name="Yamagata S."/>
            <person name="Horiuchi T."/>
        </authorList>
    </citation>
    <scope>NUCLEOTIDE SEQUENCE [LARGE SCALE GENOMIC DNA]</scope>
    <source>
        <strain>K12 / W3110 / ATCC 27325 / DSM 5911</strain>
    </source>
</reference>
<reference key="5">
    <citation type="journal article" date="1997" name="Science">
        <title>The complete genome sequence of Escherichia coli K-12.</title>
        <authorList>
            <person name="Blattner F.R."/>
            <person name="Plunkett G. III"/>
            <person name="Bloch C.A."/>
            <person name="Perna N.T."/>
            <person name="Burland V."/>
            <person name="Riley M."/>
            <person name="Collado-Vides J."/>
            <person name="Glasner J.D."/>
            <person name="Rode C.K."/>
            <person name="Mayhew G.F."/>
            <person name="Gregor J."/>
            <person name="Davis N.W."/>
            <person name="Kirkpatrick H.A."/>
            <person name="Goeden M.A."/>
            <person name="Rose D.J."/>
            <person name="Mau B."/>
            <person name="Shao Y."/>
        </authorList>
    </citation>
    <scope>NUCLEOTIDE SEQUENCE [LARGE SCALE GENOMIC DNA]</scope>
    <source>
        <strain>K12 / MG1655 / ATCC 47076</strain>
    </source>
</reference>
<reference key="6">
    <citation type="journal article" date="2006" name="Mol. Syst. Biol.">
        <title>Highly accurate genome sequences of Escherichia coli K-12 strains MG1655 and W3110.</title>
        <authorList>
            <person name="Hayashi K."/>
            <person name="Morooka N."/>
            <person name="Yamamoto Y."/>
            <person name="Fujita K."/>
            <person name="Isono K."/>
            <person name="Choi S."/>
            <person name="Ohtsubo E."/>
            <person name="Baba T."/>
            <person name="Wanner B.L."/>
            <person name="Mori H."/>
            <person name="Horiuchi T."/>
        </authorList>
    </citation>
    <scope>NUCLEOTIDE SEQUENCE [LARGE SCALE GENOMIC DNA]</scope>
    <source>
        <strain>K12 / W3110 / ATCC 27325 / DSM 5911</strain>
    </source>
</reference>
<reference key="7">
    <citation type="submission" date="1996-06" db="EMBL/GenBank/DDBJ databases">
        <authorList>
            <person name="Huisman G.W."/>
        </authorList>
    </citation>
    <scope>NUCLEOTIDE SEQUENCE [GENOMIC DNA] OF 1-216</scope>
    <source>
        <strain>K12</strain>
    </source>
</reference>
<reference key="8">
    <citation type="journal article" date="1989" name="J. Bacteriol.">
        <title>Sequence and overexpression of the menD gene from Escherichia coli.</title>
        <authorList>
            <person name="Popp J.L."/>
        </authorList>
    </citation>
    <scope>NUCLEOTIDE SEQUENCE [GENOMIC DNA] OF 216-431</scope>
</reference>
<reference key="9">
    <citation type="journal article" date="1994" name="Nucleic Acids Res.">
        <title>Intrinsic and extrinsic approaches for detecting genes in a bacterial genome.</title>
        <authorList>
            <person name="Borodovsky M."/>
            <person name="Rudd K.E."/>
            <person name="Koonin E.V."/>
        </authorList>
    </citation>
    <scope>IDENTIFICATION</scope>
</reference>
<reference key="10">
    <citation type="journal article" date="1997" name="J. Bacteriol.">
        <title>Menaquinone (vitamin K2) biosynthesis: overexpression, purification, and characterization of a new isochorismate synthase from Escherichia coli.</title>
        <authorList>
            <person name="Daruwala R."/>
            <person name="Bhattacharyya D.K."/>
            <person name="Kwon O."/>
            <person name="Meganathan R."/>
        </authorList>
    </citation>
    <scope>FUNCTION</scope>
    <scope>CATALYTIC ACTIVITY</scope>
    <scope>BIOPHYSICOCHEMICAL PROPERTIES</scope>
    <scope>SUBUNIT</scope>
    <scope>COFACTOR</scope>
</reference>
<reference key="11">
    <citation type="journal article" date="1998" name="Biochim. Biophys. Acta">
        <title>The role of isochorismate hydroxymutase genes entC and menF in enterobactin and menaquinone biosynthesis in Escherichia coli.</title>
        <authorList>
            <person name="Dahm C."/>
            <person name="Muller R."/>
            <person name="Schulte G."/>
            <person name="Schmidt K."/>
            <person name="Leistner E."/>
        </authorList>
    </citation>
    <scope>FUNCTION</scope>
    <scope>CATALYTIC ACTIVITY</scope>
    <scope>COFACTOR</scope>
    <scope>BIOPHYSICOCHEMICAL PROPERTIES</scope>
    <scope>PATHWAY</scope>
    <scope>DISRUPTION PHENOTYPE</scope>
</reference>
<reference key="12">
    <citation type="journal article" date="2007" name="Biochemistry">
        <title>Lysine 190 is the catalytic base in MenF, the menaquinone-specific isochorismate synthase from Escherichia coli: implications for an enzyme family.</title>
        <authorList>
            <person name="Kolappan S."/>
            <person name="Zwahlen J."/>
            <person name="Zhou R."/>
            <person name="Truglio J.J."/>
            <person name="Tonge P.J."/>
            <person name="Kisker C."/>
        </authorList>
    </citation>
    <scope>X-RAY CRYSTALLOGRAPHY (2.50 ANGSTROMS)</scope>
    <scope>FUNCTION</scope>
    <scope>CATALYTIC ACTIVITY</scope>
    <scope>COFACTOR</scope>
    <scope>BIOPHYSICOCHEMICAL PROPERTIES</scope>
    <scope>MUTAGENESIS OF LYS-190; GLU-240; LEU-255; ALA-344 AND ARG-387</scope>
    <scope>ACTIVE SITES</scope>
</reference>
<reference key="13">
    <citation type="journal article" date="2008" name="Acta Crystallogr. D">
        <title>Structure of isochorismate synthase in complex with magnesium.</title>
        <authorList>
            <person name="Parsons J.F."/>
            <person name="Shi K.M."/>
            <person name="Ladner J.E."/>
        </authorList>
    </citation>
    <scope>X-RAY CRYSTALLOGRAPHY (1.95 ANGSTROMS) IN COMPLEX WITH MAGNESIUM</scope>
    <scope>COFACTOR</scope>
</reference>
<keyword id="KW-0002">3D-structure</keyword>
<keyword id="KW-0413">Isomerase</keyword>
<keyword id="KW-0460">Magnesium</keyword>
<keyword id="KW-0474">Menaquinone biosynthesis</keyword>
<keyword id="KW-0479">Metal-binding</keyword>
<keyword id="KW-1185">Reference proteome</keyword>
<protein>
    <recommendedName>
        <fullName evidence="1 9">Isochorismate synthase MenF</fullName>
        <ecNumber evidence="1 2 5 6 7">5.4.4.2</ecNumber>
    </recommendedName>
    <alternativeName>
        <fullName evidence="8">Isochorismate hydroxymutase</fullName>
    </alternativeName>
    <alternativeName>
        <fullName evidence="1">Isochorismate mutase</fullName>
    </alternativeName>
</protein>
<gene>
    <name evidence="1" type="primary">menF</name>
    <name type="synonym">yfbA</name>
    <name type="ordered locus">b2265</name>
    <name type="ordered locus">JW2260</name>
</gene>
<accession>P38051</accession>
<accession>P76479</accession>
<accession>P78297</accession>
<accession>Q47009</accession>
<accession>Q47704</accession>
<feature type="chain" id="PRO_0000154147" description="Isochorismate synthase MenF">
    <location>
        <begin position="1"/>
        <end position="431"/>
    </location>
</feature>
<feature type="active site" description="Proton acceptor" evidence="1 2">
    <location>
        <position position="190"/>
    </location>
</feature>
<feature type="active site" description="Proton donor" evidence="1 2">
    <location>
        <position position="240"/>
    </location>
</feature>
<feature type="binding site" evidence="1 3">
    <location>
        <position position="284"/>
    </location>
    <ligand>
        <name>Mg(2+)</name>
        <dbReference type="ChEBI" id="CHEBI:18420"/>
    </ligand>
</feature>
<feature type="binding site" evidence="1 3">
    <location>
        <position position="416"/>
    </location>
    <ligand>
        <name>Mg(2+)</name>
        <dbReference type="ChEBI" id="CHEBI:18420"/>
    </ligand>
</feature>
<feature type="mutagenesis site" description="Lack of activity." evidence="2">
    <original>K</original>
    <variation>A</variation>
    <location>
        <position position="190"/>
    </location>
</feature>
<feature type="mutagenesis site" description="Lack of activity." evidence="2">
    <original>E</original>
    <variation>Q</variation>
    <location>
        <position position="240"/>
    </location>
</feature>
<feature type="mutagenesis site" description="Decrease in activity." evidence="2">
    <original>L</original>
    <variation>A</variation>
    <location>
        <position position="255"/>
    </location>
</feature>
<feature type="mutagenesis site" description="Lack of activity." evidence="2">
    <original>A</original>
    <variation>T</variation>
    <location>
        <position position="344"/>
    </location>
</feature>
<feature type="mutagenesis site" description="Lack of activity." evidence="2">
    <original>R</original>
    <variation>A</variation>
    <location>
        <position position="387"/>
    </location>
</feature>
<feature type="sequence conflict" description="In Ref. 3; AAC44303." evidence="10" ref="3">
    <original>VLR</original>
    <variation>YC</variation>
    <location>
        <begin position="310"/>
        <end position="312"/>
    </location>
</feature>
<feature type="helix" evidence="12">
    <location>
        <begin position="2"/>
        <end position="15"/>
    </location>
</feature>
<feature type="strand" evidence="12">
    <location>
        <begin position="21"/>
        <end position="32"/>
    </location>
</feature>
<feature type="helix" evidence="12">
    <location>
        <begin position="40"/>
        <end position="45"/>
    </location>
</feature>
<feature type="strand" evidence="12">
    <location>
        <begin position="52"/>
        <end position="56"/>
    </location>
</feature>
<feature type="strand" evidence="12">
    <location>
        <begin position="60"/>
        <end position="75"/>
    </location>
</feature>
<feature type="helix" evidence="12">
    <location>
        <begin position="76"/>
        <end position="84"/>
    </location>
</feature>
<feature type="helix" evidence="11">
    <location>
        <begin position="87"/>
        <end position="89"/>
    </location>
</feature>
<feature type="strand" evidence="12">
    <location>
        <begin position="94"/>
        <end position="98"/>
    </location>
</feature>
<feature type="strand" evidence="12">
    <location>
        <begin position="105"/>
        <end position="117"/>
    </location>
</feature>
<feature type="strand" evidence="12">
    <location>
        <begin position="120"/>
        <end position="131"/>
    </location>
</feature>
<feature type="helix" evidence="12">
    <location>
        <begin position="133"/>
        <end position="146"/>
    </location>
</feature>
<feature type="strand" evidence="12">
    <location>
        <begin position="160"/>
        <end position="167"/>
    </location>
</feature>
<feature type="helix" evidence="12">
    <location>
        <begin position="169"/>
        <end position="185"/>
    </location>
</feature>
<feature type="strand" evidence="12">
    <location>
        <begin position="190"/>
        <end position="203"/>
    </location>
</feature>
<feature type="helix" evidence="12">
    <location>
        <begin position="207"/>
        <end position="217"/>
    </location>
</feature>
<feature type="strand" evidence="12">
    <location>
        <begin position="221"/>
        <end position="227"/>
    </location>
</feature>
<feature type="strand" evidence="12">
    <location>
        <begin position="229"/>
        <end position="238"/>
    </location>
</feature>
<feature type="strand" evidence="12">
    <location>
        <begin position="241"/>
        <end position="246"/>
    </location>
</feature>
<feature type="strand" evidence="12">
    <location>
        <begin position="249"/>
        <end position="260"/>
    </location>
</feature>
<feature type="helix" evidence="12">
    <location>
        <begin position="265"/>
        <end position="275"/>
    </location>
</feature>
<feature type="helix" evidence="12">
    <location>
        <begin position="281"/>
        <end position="296"/>
    </location>
</feature>
<feature type="helix" evidence="12">
    <location>
        <begin position="297"/>
        <end position="299"/>
    </location>
</feature>
<feature type="strand" evidence="12">
    <location>
        <begin position="309"/>
        <end position="312"/>
    </location>
</feature>
<feature type="strand" evidence="12">
    <location>
        <begin position="314"/>
        <end position="329"/>
    </location>
</feature>
<feature type="helix" evidence="12">
    <location>
        <begin position="332"/>
        <end position="339"/>
    </location>
</feature>
<feature type="turn" evidence="12">
    <location>
        <begin position="343"/>
        <end position="345"/>
    </location>
</feature>
<feature type="strand" evidence="12">
    <location>
        <begin position="346"/>
        <end position="349"/>
    </location>
</feature>
<feature type="helix" evidence="12">
    <location>
        <begin position="350"/>
        <end position="360"/>
    </location>
</feature>
<feature type="turn" evidence="12">
    <location>
        <begin position="366"/>
        <end position="369"/>
    </location>
</feature>
<feature type="strand" evidence="12">
    <location>
        <begin position="370"/>
        <end position="375"/>
    </location>
</feature>
<feature type="strand" evidence="12">
    <location>
        <begin position="377"/>
        <end position="384"/>
    </location>
</feature>
<feature type="strand" evidence="12">
    <location>
        <begin position="387"/>
        <end position="392"/>
    </location>
</feature>
<feature type="strand" evidence="12">
    <location>
        <begin position="395"/>
        <end position="404"/>
    </location>
</feature>
<feature type="helix" evidence="12">
    <location>
        <begin position="410"/>
        <end position="425"/>
    </location>
</feature>
<feature type="turn" evidence="12">
    <location>
        <begin position="426"/>
        <end position="428"/>
    </location>
</feature>
<evidence type="ECO:0000255" key="1">
    <source>
        <dbReference type="HAMAP-Rule" id="MF_01935"/>
    </source>
</evidence>
<evidence type="ECO:0000269" key="2">
    <source>
    </source>
</evidence>
<evidence type="ECO:0000269" key="3">
    <source>
    </source>
</evidence>
<evidence type="ECO:0000269" key="4">
    <source>
    </source>
</evidence>
<evidence type="ECO:0000269" key="5">
    <source>
    </source>
</evidence>
<evidence type="ECO:0000269" key="6">
    <source>
    </source>
</evidence>
<evidence type="ECO:0000269" key="7">
    <source>
    </source>
</evidence>
<evidence type="ECO:0000303" key="8">
    <source>
    </source>
</evidence>
<evidence type="ECO:0000303" key="9">
    <source>
    </source>
</evidence>
<evidence type="ECO:0000305" key="10"/>
<evidence type="ECO:0007829" key="11">
    <source>
        <dbReference type="PDB" id="2EUA"/>
    </source>
</evidence>
<evidence type="ECO:0007829" key="12">
    <source>
        <dbReference type="PDB" id="3BZM"/>
    </source>
</evidence>
<name>MENF_ECOLI</name>
<comment type="function">
    <text evidence="2 5 6 7">Catalyzes the conversion of chorismate to isochorismate. Can also catalyze the reverse reaction, but with a lower efficiency.</text>
</comment>
<comment type="catalytic activity">
    <reaction evidence="1 2 5 6 7">
        <text>chorismate = isochorismate</text>
        <dbReference type="Rhea" id="RHEA:18985"/>
        <dbReference type="ChEBI" id="CHEBI:29748"/>
        <dbReference type="ChEBI" id="CHEBI:29780"/>
        <dbReference type="EC" id="5.4.4.2"/>
    </reaction>
</comment>
<comment type="cofactor">
    <cofactor evidence="1 2 3 6 7">
        <name>Mg(2+)</name>
        <dbReference type="ChEBI" id="CHEBI:18420"/>
    </cofactor>
    <text evidence="2">Binds more tightly in the presence of chorismate.</text>
</comment>
<comment type="biophysicochemical properties">
    <kinetics>
        <KM evidence="7">119 uM for isochorismate (at pH 7.5 and 37 degrees Celsius)</KM>
        <KM evidence="7">166.9 uM for chorismate (at pH 7.5 and 37 degrees Celsius)</KM>
        <KM evidence="2">192 uM for chorismate</KM>
        <KM evidence="6">195 uM for chorismate</KM>
        <KM evidence="2">770 uM for magnesium</KM>
        <Vmax evidence="7">91.7 pmol/sec/mg enzyme with chorismate as substrate (at pH 7.5 and 37 degrees Celsius)</Vmax>
        <Vmax evidence="7">2.4 pmol/sec/mg enzyme with isochorismate as substrate (at pH 7.5 and 37 degrees Celsius)</Vmax>
        <text evidence="2 6 7">kcat is 213 min(-1) for mutase activity with chorismate. kcat is 176 min(-1) for mutase activity with chorismate in the presence of 30 mM of beta-mercaptoethanol (BME). kcat is 144.9 min(-1) for mutase activity with chorismate (at pH 7.5 and 37 degrees Celsius). kcat is 80 min(-1) for mutase activity with chorismate in the absence of 30 mM of beta-mercaptoethanol (BME). kcat is 3.8 min(-1) for mutase activity with isochorismate (at pH 7.5 and 37 degrees Celsius).</text>
    </kinetics>
    <phDependence>
        <text evidence="6 7">Optimum pH is between 7.5 and 8. The mutase activity decreases sharply at pH 6.5 and 9 to about 20% of that observed at the optimum pH.</text>
    </phDependence>
    <temperatureDependence>
        <text evidence="6 7">Optimum temperature is 37 degrees Celsius. At 60 degrees Celsius the mutase activity is completely lost.</text>
    </temperatureDependence>
</comment>
<comment type="pathway">
    <text evidence="1 4 7">Quinol/quinone metabolism; 1,4-dihydroxy-2-naphthoate biosynthesis; 1,4-dihydroxy-2-naphthoate from chorismate: step 1/7.</text>
</comment>
<comment type="pathway">
    <text evidence="1 7">Quinol/quinone metabolism; menaquinone biosynthesis.</text>
</comment>
<comment type="subunit">
    <text evidence="6">Homodimer.</text>
</comment>
<comment type="disruption phenotype">
    <text evidence="7">Mutant produces only a trace of menaquinone.</text>
</comment>
<comment type="similarity">
    <text evidence="1 10">Belongs to the isochorismate synthase family.</text>
</comment>
<comment type="sequence caution" evidence="10">
    <conflict type="frameshift">
        <sequence resource="EMBL" id="M21787"/>
    </conflict>
</comment>
<sequence>MQSLTTALENLLRHLSQEIPATPGIRVIDIPFPLKDAFDALSWLASQQTYPQFYWQQRNGDEEAVVLGAITRFTSLDQAQRFLRQHPEHADLRIWGLNAFDPSQGNLLLPRLEWRRCGGKATLRLTLFSESSLQHDAIQAKEFIATLVSIKPLPGLHLTTTREQHWPDKTGWTQLIELATKTIAEGELDKVVLARATDLHFASPVNAAAMMAASRRLNLNCYHFYMAFDGENAFLGSSPERLWRRRDKALRTEALAGTVANNPDDKQAQQLGEWLMADDKNQRENMLVVEDICQRLQADTQTLDVLPPQVLRLRKVQHLRRCIWTSLNKADDVICLHQLQPTAAVAGLPRDLARQFIARHEPFTREWYAGSAGYLSLQQSEFCVSLRSAKISGNVVRLYAGAGIVRGSDPEQEWQEIDNKAAGLRTLLQME</sequence>
<proteinExistence type="evidence at protein level"/>
<dbReference type="EC" id="5.4.4.2" evidence="1 2 5 6 7"/>
<dbReference type="EMBL" id="Z50849">
    <property type="protein sequence ID" value="CAA90702.1"/>
    <property type="molecule type" value="Genomic_DNA"/>
</dbReference>
<dbReference type="EMBL" id="U54790">
    <property type="protein sequence ID" value="AAC44303.1"/>
    <property type="molecule type" value="Genomic_DNA"/>
</dbReference>
<dbReference type="EMBL" id="U00096">
    <property type="protein sequence ID" value="AAC75325.2"/>
    <property type="molecule type" value="Genomic_DNA"/>
</dbReference>
<dbReference type="EMBL" id="AP009048">
    <property type="protein sequence ID" value="BAA16092.1"/>
    <property type="molecule type" value="Genomic_DNA"/>
</dbReference>
<dbReference type="EMBL" id="U58768">
    <property type="protein sequence ID" value="AAB02729.1"/>
    <property type="molecule type" value="Genomic_DNA"/>
</dbReference>
<dbReference type="EMBL" id="M21787">
    <property type="status" value="NOT_ANNOTATED_CDS"/>
    <property type="molecule type" value="Genomic_DNA"/>
</dbReference>
<dbReference type="PIR" id="G64997">
    <property type="entry name" value="G64997"/>
</dbReference>
<dbReference type="RefSeq" id="NP_416768.4">
    <property type="nucleotide sequence ID" value="NC_000913.3"/>
</dbReference>
<dbReference type="RefSeq" id="WP_001191419.1">
    <property type="nucleotide sequence ID" value="NZ_LN832404.1"/>
</dbReference>
<dbReference type="PDB" id="2EUA">
    <property type="method" value="X-ray"/>
    <property type="resolution" value="2.50 A"/>
    <property type="chains" value="A/B=1-431"/>
</dbReference>
<dbReference type="PDB" id="3BZM">
    <property type="method" value="X-ray"/>
    <property type="resolution" value="1.95 A"/>
    <property type="chains" value="A=1-431"/>
</dbReference>
<dbReference type="PDB" id="3BZN">
    <property type="method" value="X-ray"/>
    <property type="resolution" value="2.00 A"/>
    <property type="chains" value="A=1-431"/>
</dbReference>
<dbReference type="PDBsum" id="2EUA"/>
<dbReference type="PDBsum" id="3BZM"/>
<dbReference type="PDBsum" id="3BZN"/>
<dbReference type="SMR" id="P38051"/>
<dbReference type="BioGRID" id="4262080">
    <property type="interactions" value="12"/>
</dbReference>
<dbReference type="DIP" id="DIP-10187N"/>
<dbReference type="FunCoup" id="P38051">
    <property type="interactions" value="167"/>
</dbReference>
<dbReference type="IntAct" id="P38051">
    <property type="interactions" value="7"/>
</dbReference>
<dbReference type="STRING" id="511145.b2265"/>
<dbReference type="jPOST" id="P38051"/>
<dbReference type="PaxDb" id="511145-b2265"/>
<dbReference type="EnsemblBacteria" id="AAC75325">
    <property type="protein sequence ID" value="AAC75325"/>
    <property type="gene ID" value="b2265"/>
</dbReference>
<dbReference type="GeneID" id="946712"/>
<dbReference type="KEGG" id="ecj:JW2260"/>
<dbReference type="KEGG" id="eco:b2265"/>
<dbReference type="KEGG" id="ecoc:C3026_12650"/>
<dbReference type="PATRIC" id="fig|1411691.4.peg.4471"/>
<dbReference type="EchoBASE" id="EB2265"/>
<dbReference type="eggNOG" id="COG1169">
    <property type="taxonomic scope" value="Bacteria"/>
</dbReference>
<dbReference type="HOGENOM" id="CLU_006493_8_4_6"/>
<dbReference type="InParanoid" id="P38051"/>
<dbReference type="OMA" id="YPQFYLH"/>
<dbReference type="OrthoDB" id="9806579at2"/>
<dbReference type="PhylomeDB" id="P38051"/>
<dbReference type="BioCyc" id="EcoCyc:MENF-MONOMER"/>
<dbReference type="BioCyc" id="MetaCyc:MENF-MONOMER"/>
<dbReference type="BRENDA" id="5.4.4.2">
    <property type="organism ID" value="2026"/>
</dbReference>
<dbReference type="SABIO-RK" id="P38051"/>
<dbReference type="UniPathway" id="UPA00079"/>
<dbReference type="UniPathway" id="UPA01057">
    <property type="reaction ID" value="UER00163"/>
</dbReference>
<dbReference type="EvolutionaryTrace" id="P38051"/>
<dbReference type="PRO" id="PR:P38051"/>
<dbReference type="Proteomes" id="UP000000625">
    <property type="component" value="Chromosome"/>
</dbReference>
<dbReference type="GO" id="GO:0008909">
    <property type="term" value="F:isochorismate synthase activity"/>
    <property type="evidence" value="ECO:0000314"/>
    <property type="project" value="EcoCyc"/>
</dbReference>
<dbReference type="GO" id="GO:0000287">
    <property type="term" value="F:magnesium ion binding"/>
    <property type="evidence" value="ECO:0000314"/>
    <property type="project" value="EcoCyc"/>
</dbReference>
<dbReference type="GO" id="GO:0009234">
    <property type="term" value="P:menaquinone biosynthetic process"/>
    <property type="evidence" value="ECO:0000315"/>
    <property type="project" value="EcoCyc"/>
</dbReference>
<dbReference type="FunFam" id="3.60.120.10:FF:000002">
    <property type="entry name" value="Isochorismate synthase MenF"/>
    <property type="match status" value="1"/>
</dbReference>
<dbReference type="Gene3D" id="3.60.120.10">
    <property type="entry name" value="Anthranilate synthase"/>
    <property type="match status" value="1"/>
</dbReference>
<dbReference type="HAMAP" id="MF_01935">
    <property type="entry name" value="MenF"/>
    <property type="match status" value="1"/>
</dbReference>
<dbReference type="InterPro" id="IPR005801">
    <property type="entry name" value="ADC_synthase"/>
</dbReference>
<dbReference type="InterPro" id="IPR015890">
    <property type="entry name" value="Chorismate_C"/>
</dbReference>
<dbReference type="InterPro" id="IPR004561">
    <property type="entry name" value="IsoChor_synthase"/>
</dbReference>
<dbReference type="InterPro" id="IPR034681">
    <property type="entry name" value="MenF"/>
</dbReference>
<dbReference type="InterPro" id="IPR044250">
    <property type="entry name" value="MenF-like"/>
</dbReference>
<dbReference type="NCBIfam" id="TIGR00543">
    <property type="entry name" value="isochor_syn"/>
    <property type="match status" value="1"/>
</dbReference>
<dbReference type="NCBIfam" id="NF011588">
    <property type="entry name" value="PRK15012.1"/>
    <property type="match status" value="1"/>
</dbReference>
<dbReference type="PANTHER" id="PTHR47253">
    <property type="match status" value="1"/>
</dbReference>
<dbReference type="PANTHER" id="PTHR47253:SF4">
    <property type="entry name" value="ISOCHORISMATE SYNTHASE 2, CHLOROPLASTIC"/>
    <property type="match status" value="1"/>
</dbReference>
<dbReference type="Pfam" id="PF00425">
    <property type="entry name" value="Chorismate_bind"/>
    <property type="match status" value="1"/>
</dbReference>
<dbReference type="SUPFAM" id="SSF56322">
    <property type="entry name" value="ADC synthase"/>
    <property type="match status" value="1"/>
</dbReference>
<organism>
    <name type="scientific">Escherichia coli (strain K12)</name>
    <dbReference type="NCBI Taxonomy" id="83333"/>
    <lineage>
        <taxon>Bacteria</taxon>
        <taxon>Pseudomonadati</taxon>
        <taxon>Pseudomonadota</taxon>
        <taxon>Gammaproteobacteria</taxon>
        <taxon>Enterobacterales</taxon>
        <taxon>Enterobacteriaceae</taxon>
        <taxon>Escherichia</taxon>
    </lineage>
</organism>